<accession>Q75DP8</accession>
<protein>
    <recommendedName>
        <fullName>Maintenance of telomere capping protein 2</fullName>
    </recommendedName>
</protein>
<sequence>MVSELSLPEFEAGLSASLTCKRNFACFATFAGEIIGALRGSRLRVQLLEDFSTIGKDSVLSGELQVLVLATMQELPPREQNEVARWLRALRKVHPGLVCIATIGAHENGGPGMTNFLRRQFWFATRGPKRACGALRLPKRAAFTVHPAVHRYVLDVLVHIRMHRLLDHSQAGGASSSSAEDVLDLCRWLCSANHPEKTFVTPDDVQQACAWYFPMHLDVIRLPQQEASVLYGTSMKFAEDLLIGLRTFLKKTGTVDNPLLLETLIVQEVLGKVVPAI</sequence>
<organism>
    <name type="scientific">Eremothecium gossypii (strain ATCC 10895 / CBS 109.51 / FGSC 9923 / NRRL Y-1056)</name>
    <name type="common">Yeast</name>
    <name type="synonym">Ashbya gossypii</name>
    <dbReference type="NCBI Taxonomy" id="284811"/>
    <lineage>
        <taxon>Eukaryota</taxon>
        <taxon>Fungi</taxon>
        <taxon>Dikarya</taxon>
        <taxon>Ascomycota</taxon>
        <taxon>Saccharomycotina</taxon>
        <taxon>Saccharomycetes</taxon>
        <taxon>Saccharomycetales</taxon>
        <taxon>Saccharomycetaceae</taxon>
        <taxon>Eremothecium</taxon>
    </lineage>
</organism>
<reference key="1">
    <citation type="journal article" date="2004" name="Science">
        <title>The Ashbya gossypii genome as a tool for mapping the ancient Saccharomyces cerevisiae genome.</title>
        <authorList>
            <person name="Dietrich F.S."/>
            <person name="Voegeli S."/>
            <person name="Brachat S."/>
            <person name="Lerch A."/>
            <person name="Gates K."/>
            <person name="Steiner S."/>
            <person name="Mohr C."/>
            <person name="Poehlmann R."/>
            <person name="Luedi P."/>
            <person name="Choi S."/>
            <person name="Wing R.A."/>
            <person name="Flavier A."/>
            <person name="Gaffney T.D."/>
            <person name="Philippsen P."/>
        </authorList>
    </citation>
    <scope>NUCLEOTIDE SEQUENCE [LARGE SCALE GENOMIC DNA]</scope>
    <source>
        <strain>ATCC 10895 / CBS 109.51 / FGSC 9923 / NRRL Y-1056</strain>
    </source>
</reference>
<reference key="2">
    <citation type="journal article" date="2013" name="G3 (Bethesda)">
        <title>Genomes of Ashbya fungi isolated from insects reveal four mating-type loci, numerous translocations, lack of transposons, and distinct gene duplications.</title>
        <authorList>
            <person name="Dietrich F.S."/>
            <person name="Voegeli S."/>
            <person name="Kuo S."/>
            <person name="Philippsen P."/>
        </authorList>
    </citation>
    <scope>GENOME REANNOTATION</scope>
    <source>
        <strain>ATCC 10895 / CBS 109.51 / FGSC 9923 / NRRL Y-1056</strain>
    </source>
</reference>
<gene>
    <name type="primary">MTC2</name>
    <name type="ordered locus">ABL031W</name>
</gene>
<name>MTC2_EREGS</name>
<keyword id="KW-1185">Reference proteome</keyword>
<comment type="function">
    <text evidence="1">May be involved in telomere capping.</text>
</comment>
<comment type="similarity">
    <text evidence="2">Belongs to the MTC2 family.</text>
</comment>
<feature type="chain" id="PRO_0000407760" description="Maintenance of telomere capping protein 2">
    <location>
        <begin position="1"/>
        <end position="277"/>
    </location>
</feature>
<evidence type="ECO:0000250" key="1"/>
<evidence type="ECO:0000305" key="2"/>
<proteinExistence type="inferred from homology"/>
<dbReference type="EMBL" id="AE016815">
    <property type="protein sequence ID" value="AAS50740.2"/>
    <property type="molecule type" value="Genomic_DNA"/>
</dbReference>
<dbReference type="RefSeq" id="NP_982916.2">
    <property type="nucleotide sequence ID" value="NM_208269.2"/>
</dbReference>
<dbReference type="FunCoup" id="Q75DP8">
    <property type="interactions" value="123"/>
</dbReference>
<dbReference type="STRING" id="284811.Q75DP8"/>
<dbReference type="EnsemblFungi" id="AAS50740">
    <property type="protein sequence ID" value="AAS50740"/>
    <property type="gene ID" value="AGOS_ABL031W"/>
</dbReference>
<dbReference type="GeneID" id="4619008"/>
<dbReference type="KEGG" id="ago:AGOS_ABL031W"/>
<dbReference type="eggNOG" id="ENOG502QQMN">
    <property type="taxonomic scope" value="Eukaryota"/>
</dbReference>
<dbReference type="HOGENOM" id="CLU_060779_0_0_1"/>
<dbReference type="InParanoid" id="Q75DP8"/>
<dbReference type="OMA" id="WFACAEP"/>
<dbReference type="OrthoDB" id="5582146at2759"/>
<dbReference type="Proteomes" id="UP000000591">
    <property type="component" value="Chromosome II"/>
</dbReference>